<proteinExistence type="inferred from homology"/>
<feature type="chain" id="PRO_1000184946" description="Putative phosphoesterase BAMEG_3349">
    <location>
        <begin position="1"/>
        <end position="172"/>
    </location>
</feature>
<feature type="short sequence motif" description="HXTX 1" evidence="1">
    <location>
        <begin position="34"/>
        <end position="37"/>
    </location>
</feature>
<feature type="short sequence motif" description="HXTX 2" evidence="1">
    <location>
        <begin position="115"/>
        <end position="118"/>
    </location>
</feature>
<feature type="active site" description="Proton donor" evidence="1">
    <location>
        <position position="34"/>
    </location>
</feature>
<feature type="active site" description="Proton acceptor" evidence="1">
    <location>
        <position position="115"/>
    </location>
</feature>
<organism>
    <name type="scientific">Bacillus anthracis (strain CDC 684 / NRRL 3495)</name>
    <dbReference type="NCBI Taxonomy" id="568206"/>
    <lineage>
        <taxon>Bacteria</taxon>
        <taxon>Bacillati</taxon>
        <taxon>Bacillota</taxon>
        <taxon>Bacilli</taxon>
        <taxon>Bacillales</taxon>
        <taxon>Bacillaceae</taxon>
        <taxon>Bacillus</taxon>
        <taxon>Bacillus cereus group</taxon>
    </lineage>
</organism>
<protein>
    <recommendedName>
        <fullName evidence="1">Putative phosphoesterase BAMEG_3349</fullName>
        <ecNumber evidence="1">3.1.-.-</ecNumber>
    </recommendedName>
</protein>
<sequence length="172" mass="19877">MKLGIVIFPSKMIQDKANGLRKRYDPHYALVPPHITLKTPFETQDEQLESIVNKLHTIASKTNPFTLHVGKVGSFAPVNNVIYFKVEKTPELTFLNEEMHSGFFTQEREYAFVPHLTIGQGLSDAEHADVLGRLRMKDFYYEQPIDRFHLLYQLENGTWTVHETFRLGKGNN</sequence>
<dbReference type="EC" id="3.1.-.-" evidence="1"/>
<dbReference type="EMBL" id="CP001215">
    <property type="protein sequence ID" value="ACP15999.1"/>
    <property type="molecule type" value="Genomic_DNA"/>
</dbReference>
<dbReference type="RefSeq" id="WP_000765879.1">
    <property type="nucleotide sequence ID" value="NC_012581.1"/>
</dbReference>
<dbReference type="SMR" id="C3LBP1"/>
<dbReference type="KEGG" id="bah:BAMEG_3349"/>
<dbReference type="HOGENOM" id="CLU_132020_0_0_9"/>
<dbReference type="GO" id="GO:0016788">
    <property type="term" value="F:hydrolase activity, acting on ester bonds"/>
    <property type="evidence" value="ECO:0007669"/>
    <property type="project" value="UniProtKB-UniRule"/>
</dbReference>
<dbReference type="Gene3D" id="3.90.1140.10">
    <property type="entry name" value="Cyclic phosphodiesterase"/>
    <property type="match status" value="1"/>
</dbReference>
<dbReference type="HAMAP" id="MF_01444">
    <property type="entry name" value="2H_phosphoesterase_YjcG"/>
    <property type="match status" value="1"/>
</dbReference>
<dbReference type="InterPro" id="IPR050580">
    <property type="entry name" value="2H_phosphoesterase_YjcG-like"/>
</dbReference>
<dbReference type="InterPro" id="IPR009097">
    <property type="entry name" value="Cyclic_Pdiesterase"/>
</dbReference>
<dbReference type="InterPro" id="IPR022932">
    <property type="entry name" value="YjcG"/>
</dbReference>
<dbReference type="NCBIfam" id="NF010223">
    <property type="entry name" value="PRK13679.1"/>
    <property type="match status" value="1"/>
</dbReference>
<dbReference type="PANTHER" id="PTHR40037:SF1">
    <property type="entry name" value="PHOSPHOESTERASE SAOUHSC_00951-RELATED"/>
    <property type="match status" value="1"/>
</dbReference>
<dbReference type="PANTHER" id="PTHR40037">
    <property type="entry name" value="PHOSPHOESTERASE YJCG-RELATED"/>
    <property type="match status" value="1"/>
</dbReference>
<dbReference type="Pfam" id="PF13563">
    <property type="entry name" value="2_5_RNA_ligase2"/>
    <property type="match status" value="1"/>
</dbReference>
<dbReference type="SUPFAM" id="SSF55144">
    <property type="entry name" value="LigT-like"/>
    <property type="match status" value="1"/>
</dbReference>
<accession>C3LBP1</accession>
<name>Y3349_BACAC</name>
<reference key="1">
    <citation type="submission" date="2008-10" db="EMBL/GenBank/DDBJ databases">
        <title>Genome sequence of Bacillus anthracis str. CDC 684.</title>
        <authorList>
            <person name="Dodson R.J."/>
            <person name="Munk A.C."/>
            <person name="Brettin T."/>
            <person name="Bruce D."/>
            <person name="Detter C."/>
            <person name="Tapia R."/>
            <person name="Han C."/>
            <person name="Sutton G."/>
            <person name="Sims D."/>
        </authorList>
    </citation>
    <scope>NUCLEOTIDE SEQUENCE [LARGE SCALE GENOMIC DNA]</scope>
    <source>
        <strain>CDC 684 / NRRL 3495</strain>
    </source>
</reference>
<gene>
    <name type="ordered locus">BAMEG_3349</name>
</gene>
<keyword id="KW-0378">Hydrolase</keyword>
<comment type="similarity">
    <text evidence="1">Belongs to the 2H phosphoesterase superfamily. YjcG family.</text>
</comment>
<evidence type="ECO:0000255" key="1">
    <source>
        <dbReference type="HAMAP-Rule" id="MF_01444"/>
    </source>
</evidence>